<proteinExistence type="evidence at protein level"/>
<evidence type="ECO:0000250" key="1"/>
<evidence type="ECO:0000250" key="2">
    <source>
        <dbReference type="UniProtKB" id="Q68CP4"/>
    </source>
</evidence>
<evidence type="ECO:0000255" key="3"/>
<evidence type="ECO:0000256" key="4">
    <source>
        <dbReference type="SAM" id="MobiDB-lite"/>
    </source>
</evidence>
<evidence type="ECO:0000269" key="5">
    <source>
    </source>
</evidence>
<evidence type="ECO:0000269" key="6">
    <source>
    </source>
</evidence>
<evidence type="ECO:0000269" key="7">
    <source>
    </source>
</evidence>
<evidence type="ECO:0000305" key="8"/>
<evidence type="ECO:0007744" key="9">
    <source>
    </source>
</evidence>
<organism>
    <name type="scientific">Mus musculus</name>
    <name type="common">Mouse</name>
    <dbReference type="NCBI Taxonomy" id="10090"/>
    <lineage>
        <taxon>Eukaryota</taxon>
        <taxon>Metazoa</taxon>
        <taxon>Chordata</taxon>
        <taxon>Craniata</taxon>
        <taxon>Vertebrata</taxon>
        <taxon>Euteleostomi</taxon>
        <taxon>Mammalia</taxon>
        <taxon>Eutheria</taxon>
        <taxon>Euarchontoglires</taxon>
        <taxon>Glires</taxon>
        <taxon>Rodentia</taxon>
        <taxon>Myomorpha</taxon>
        <taxon>Muroidea</taxon>
        <taxon>Muridae</taxon>
        <taxon>Murinae</taxon>
        <taxon>Mus</taxon>
        <taxon>Mus</taxon>
    </lineage>
</organism>
<name>HGNAT_MOUSE</name>
<protein>
    <recommendedName>
        <fullName>Heparan-alpha-glucosaminide N-acetyltransferase</fullName>
        <ecNumber>2.3.1.78</ecNumber>
    </recommendedName>
    <alternativeName>
        <fullName>Transmembrane protein 76</fullName>
    </alternativeName>
</protein>
<sequence>MTGGSSSRRRRAEERSSAAGTERNSRREAVGGMGAGPALAALLLAGSVLSATLLAPGRRAEPDLDEKRNVELKMDQALLLIHNELLGTSLTVYWKSDDCYQCTFQPLANVSHGGKPAKPSVAPVSVSTQHGSILQVNSTSEERAACRLEYKFGEFGNYSLLVQHASSGANKIACDIIVNENPVDSNLPVSIAFLVGLALIVAVSLLRLLLSLDDVNNWISKTIASRETDRLINSELGSPSRADPLSADYQPETRRSSANRLRCVDTFRGLALVLMVFVNYGGGKYWYFKHSSWNGLTVADLVFPWFVFIMGTSIFLSMTSILQRGCSKLKLLGKIVWRSFLLICIGVIIVNPNYCLGPLSWDKVRIPGVLQRLGVTYFVVAVLEFFFWKPVPDSCTLESSCFSLRDITSSWPQWLTILTLESIWLALTFFLPVPGCPTGYLGPGGIGDLGKYPHCTGGAAGYIDRLLLGDNHLYQHPSSTVLYHTEVAYDPEGVLGTINSIVMAFLGVQAGKILVYYKDQTKAILTRFAAWCCILGLISIVLTKVSANEGFIPINKNLWSISYVTTLSCFAFFILLILYPVVDVKGLWTGTPFFYPGMNSILVYVGHEVLENYFPFQWKLADEQSHKEHLIQNIVATALWVLIAYVLYKKKLFWKI</sequence>
<comment type="function">
    <text evidence="5">Lysosomal acetyltransferase that acetylates the non-reducing terminal alpha-glucosamine residue of intralysosomal heparin or heparan sulfate, converting it into a substrate for luminal alpha-N-acetyl glucosaminidase.</text>
</comment>
<comment type="catalytic activity">
    <reaction evidence="5">
        <text>alpha-D-glucosaminyl-[heparan sulfate](n) + acetyl-CoA = N-acetyl-alpha-D-glucosaminyl-[heparan sulfate](n) + CoA + H(+)</text>
        <dbReference type="Rhea" id="RHEA:15125"/>
        <dbReference type="Rhea" id="RHEA-COMP:9830"/>
        <dbReference type="Rhea" id="RHEA-COMP:11585"/>
        <dbReference type="ChEBI" id="CHEBI:15378"/>
        <dbReference type="ChEBI" id="CHEBI:57287"/>
        <dbReference type="ChEBI" id="CHEBI:57288"/>
        <dbReference type="ChEBI" id="CHEBI:58388"/>
        <dbReference type="ChEBI" id="CHEBI:70974"/>
        <dbReference type="EC" id="2.3.1.78"/>
    </reaction>
</comment>
<comment type="subunit">
    <text evidence="1">Homooligomer. Homooligomerization is necessary for enzyme activity (By similarity).</text>
</comment>
<comment type="subcellular location">
    <subcellularLocation>
        <location evidence="5">Lysosome membrane</location>
        <topology evidence="5">Multi-pass membrane protein</topology>
    </subcellularLocation>
    <text evidence="1">Colocalizes with the lysosomal marker LAMP2. The signal peptide is not cleaved upon translocation into the endoplasmic reticulum; the precursor is probably targeted to the lysosomes via the adapter protein complex-mediated pathway that involves tyrosine- and/or dileucine-based conserved amino acid motifs in the last C-terminus 16-amino acid domain (By similarity).</text>
</comment>
<comment type="alternative products">
    <event type="alternative initiation"/>
    <isoform>
        <id>Q3UDW8-1</id>
        <name>1</name>
        <sequence type="displayed"/>
    </isoform>
    <isoform>
        <id>Q3UDW8-2</id>
        <name>2</name>
        <sequence type="described" ref="VSP_040505"/>
    </isoform>
</comment>
<comment type="tissue specificity">
    <text evidence="7">Expressed in the retina.</text>
</comment>
<comment type="developmental stage">
    <text evidence="7">Expressed in the developing eye as early as 14 dpc, with equal high expression levels after birth (postnatal day 1 (P1) and postnatal day 30 (P30)).</text>
</comment>
<comment type="PTM">
    <text evidence="1">Undergoes intralysosomal proteolytic cleavage; occurs within the end of the first and/or the beginning of the second luminal domain and is essential for the activation of the enzyme.</text>
</comment>
<comment type="PTM">
    <text evidence="1">Glycosylated.</text>
</comment>
<comment type="miscellaneous">
    <text evidence="1">A signal sequence is predicted but has been shown not to be cleaved in the endoplasmic reticulum.</text>
</comment>
<comment type="sequence caution" evidence="8">
    <conflict type="erroneous initiation">
        <sequence resource="EMBL-CDS" id="AAH24084"/>
    </conflict>
    <text>Truncated N-terminus.</text>
</comment>
<comment type="sequence caution" evidence="8">
    <conflict type="erroneous initiation">
        <sequence resource="EMBL-CDS" id="BAC29006"/>
    </conflict>
    <text>Truncated N-terminus.</text>
</comment>
<comment type="sequence caution" evidence="8">
    <conflict type="erroneous initiation">
        <sequence resource="EMBL-CDS" id="BAE31601"/>
    </conflict>
    <text>Truncated N-terminus.</text>
</comment>
<comment type="sequence caution" evidence="8">
    <conflict type="erroneous initiation">
        <sequence resource="EMBL-CDS" id="BAE35261"/>
    </conflict>
    <text>Truncated N-terminus.</text>
</comment>
<comment type="sequence caution" evidence="8">
    <conflict type="erroneous initiation">
        <sequence resource="EMBL-CDS" id="BAE35603"/>
    </conflict>
    <text>Truncated N-terminus.</text>
</comment>
<feature type="chain" id="PRO_0000273154" description="Heparan-alpha-glucosaminide N-acetyltransferase">
    <location>
        <begin position="1"/>
        <end position="656"/>
    </location>
</feature>
<feature type="topological domain" description="Lumenal, vesicle" evidence="3">
    <location>
        <begin position="1"/>
        <end position="185"/>
    </location>
</feature>
<feature type="transmembrane region" description="Helical" evidence="3">
    <location>
        <begin position="186"/>
        <end position="206"/>
    </location>
</feature>
<feature type="topological domain" description="Cytoplasmic" evidence="3">
    <location>
        <begin position="207"/>
        <end position="268"/>
    </location>
</feature>
<feature type="transmembrane region" description="Helical" evidence="3">
    <location>
        <begin position="269"/>
        <end position="289"/>
    </location>
</feature>
<feature type="topological domain" description="Lumenal, vesicle" evidence="3">
    <location>
        <begin position="290"/>
        <end position="295"/>
    </location>
</feature>
<feature type="transmembrane region" description="Helical" evidence="3">
    <location>
        <begin position="296"/>
        <end position="316"/>
    </location>
</feature>
<feature type="topological domain" description="Cytoplasmic" evidence="3">
    <location>
        <begin position="317"/>
        <end position="338"/>
    </location>
</feature>
<feature type="transmembrane region" description="Helical" evidence="3">
    <location>
        <begin position="339"/>
        <end position="359"/>
    </location>
</feature>
<feature type="topological domain" description="Lumenal, vesicle" evidence="3">
    <location>
        <begin position="360"/>
        <end position="367"/>
    </location>
</feature>
<feature type="transmembrane region" description="Helical" evidence="3">
    <location>
        <begin position="368"/>
        <end position="388"/>
    </location>
</feature>
<feature type="topological domain" description="Cytoplasmic" evidence="3">
    <location>
        <begin position="389"/>
        <end position="413"/>
    </location>
</feature>
<feature type="transmembrane region" description="Helical" evidence="3">
    <location>
        <begin position="414"/>
        <end position="434"/>
    </location>
</feature>
<feature type="topological domain" description="Lumenal, vesicle" evidence="3">
    <location>
        <begin position="435"/>
        <end position="493"/>
    </location>
</feature>
<feature type="transmembrane region" description="Helical" evidence="3">
    <location>
        <begin position="494"/>
        <end position="514"/>
    </location>
</feature>
<feature type="topological domain" description="Cytoplasmic" evidence="3">
    <location>
        <begin position="515"/>
        <end position="522"/>
    </location>
</feature>
<feature type="transmembrane region" description="Helical" evidence="3">
    <location>
        <begin position="523"/>
        <end position="543"/>
    </location>
</feature>
<feature type="topological domain" description="Lumenal, vesicle" evidence="3">
    <location>
        <begin position="544"/>
        <end position="557"/>
    </location>
</feature>
<feature type="transmembrane region" description="Helical" evidence="3">
    <location>
        <begin position="558"/>
        <end position="578"/>
    </location>
</feature>
<feature type="topological domain" description="Cytoplasmic" evidence="3">
    <location>
        <begin position="579"/>
        <end position="585"/>
    </location>
</feature>
<feature type="transmembrane region" description="Helical" evidence="3">
    <location>
        <begin position="586"/>
        <end position="606"/>
    </location>
</feature>
<feature type="topological domain" description="Lumenal, vesicle" evidence="3">
    <location>
        <begin position="607"/>
        <end position="627"/>
    </location>
</feature>
<feature type="transmembrane region" description="Helical" evidence="3">
    <location>
        <begin position="628"/>
        <end position="648"/>
    </location>
</feature>
<feature type="topological domain" description="Cytoplasmic" evidence="3">
    <location>
        <begin position="649"/>
        <end position="656"/>
    </location>
</feature>
<feature type="region of interest" description="Disordered" evidence="4">
    <location>
        <begin position="1"/>
        <end position="31"/>
    </location>
</feature>
<feature type="region of interest" description="Disordered" evidence="4">
    <location>
        <begin position="234"/>
        <end position="253"/>
    </location>
</feature>
<feature type="region of interest" description="Lysosomal targeting region" evidence="1">
    <location>
        <begin position="641"/>
        <end position="656"/>
    </location>
</feature>
<feature type="active site" evidence="1">
    <location>
        <position position="290"/>
    </location>
</feature>
<feature type="modified residue" description="Phosphoserine" evidence="2">
    <location>
        <position position="238"/>
    </location>
</feature>
<feature type="modified residue" description="Phosphoserine" evidence="2">
    <location>
        <position position="240"/>
    </location>
</feature>
<feature type="modified residue" description="Phosphotyrosine" evidence="9">
    <location>
        <position position="249"/>
    </location>
</feature>
<feature type="glycosylation site" description="N-linked (GlcNAc...) asparagine" evidence="3">
    <location>
        <position position="137"/>
    </location>
</feature>
<feature type="glycosylation site" description="N-linked (GlcNAc...) asparagine" evidence="6">
    <location>
        <position position="157"/>
    </location>
</feature>
<feature type="disulfide bond" evidence="1">
    <location>
        <begin position="146"/>
        <end position="455"/>
    </location>
</feature>
<feature type="splice variant" id="VSP_040505" description="In isoform 2." evidence="8">
    <location>
        <begin position="1"/>
        <end position="32"/>
    </location>
</feature>
<feature type="sequence conflict" description="In Ref. 3; AAH24084." evidence="8" ref="3">
    <original>R</original>
    <variation>H</variation>
    <location>
        <position position="23"/>
    </location>
</feature>
<feature type="sequence conflict" description="In Ref. 3; AAH24084." evidence="8" ref="3">
    <original>N</original>
    <variation>S</variation>
    <location>
        <position position="24"/>
    </location>
</feature>
<feature type="sequence conflict" description="In Ref. 3; AAH24084." evidence="8" ref="3">
    <original>T</original>
    <variation>A</variation>
    <location>
        <position position="222"/>
    </location>
</feature>
<feature type="sequence conflict" description="In Ref. 1; BAE35261." evidence="8" ref="1">
    <original>A</original>
    <variation>G</variation>
    <location>
        <position position="242"/>
    </location>
</feature>
<feature type="sequence conflict" description="In Ref. 1; BAE29143." evidence="8" ref="1">
    <original>L</original>
    <variation>F</variation>
    <location>
        <position position="329"/>
    </location>
</feature>
<accession>Q3UDW8</accession>
<accession>E9QNP9</accession>
<accession>Q3TWK5</accession>
<accession>Q8CBU7</accession>
<accession>Q8CIE1</accession>
<keyword id="KW-0012">Acyltransferase</keyword>
<keyword id="KW-0024">Alternative initiation</keyword>
<keyword id="KW-1015">Disulfide bond</keyword>
<keyword id="KW-0325">Glycoprotein</keyword>
<keyword id="KW-0458">Lysosome</keyword>
<keyword id="KW-0472">Membrane</keyword>
<keyword id="KW-0597">Phosphoprotein</keyword>
<keyword id="KW-1185">Reference proteome</keyword>
<keyword id="KW-0808">Transferase</keyword>
<keyword id="KW-0812">Transmembrane</keyword>
<keyword id="KW-1133">Transmembrane helix</keyword>
<reference key="1">
    <citation type="journal article" date="2005" name="Science">
        <title>The transcriptional landscape of the mammalian genome.</title>
        <authorList>
            <person name="Carninci P."/>
            <person name="Kasukawa T."/>
            <person name="Katayama S."/>
            <person name="Gough J."/>
            <person name="Frith M.C."/>
            <person name="Maeda N."/>
            <person name="Oyama R."/>
            <person name="Ravasi T."/>
            <person name="Lenhard B."/>
            <person name="Wells C."/>
            <person name="Kodzius R."/>
            <person name="Shimokawa K."/>
            <person name="Bajic V.B."/>
            <person name="Brenner S.E."/>
            <person name="Batalov S."/>
            <person name="Forrest A.R."/>
            <person name="Zavolan M."/>
            <person name="Davis M.J."/>
            <person name="Wilming L.G."/>
            <person name="Aidinis V."/>
            <person name="Allen J.E."/>
            <person name="Ambesi-Impiombato A."/>
            <person name="Apweiler R."/>
            <person name="Aturaliya R.N."/>
            <person name="Bailey T.L."/>
            <person name="Bansal M."/>
            <person name="Baxter L."/>
            <person name="Beisel K.W."/>
            <person name="Bersano T."/>
            <person name="Bono H."/>
            <person name="Chalk A.M."/>
            <person name="Chiu K.P."/>
            <person name="Choudhary V."/>
            <person name="Christoffels A."/>
            <person name="Clutterbuck D.R."/>
            <person name="Crowe M.L."/>
            <person name="Dalla E."/>
            <person name="Dalrymple B.P."/>
            <person name="de Bono B."/>
            <person name="Della Gatta G."/>
            <person name="di Bernardo D."/>
            <person name="Down T."/>
            <person name="Engstrom P."/>
            <person name="Fagiolini M."/>
            <person name="Faulkner G."/>
            <person name="Fletcher C.F."/>
            <person name="Fukushima T."/>
            <person name="Furuno M."/>
            <person name="Futaki S."/>
            <person name="Gariboldi M."/>
            <person name="Georgii-Hemming P."/>
            <person name="Gingeras T.R."/>
            <person name="Gojobori T."/>
            <person name="Green R.E."/>
            <person name="Gustincich S."/>
            <person name="Harbers M."/>
            <person name="Hayashi Y."/>
            <person name="Hensch T.K."/>
            <person name="Hirokawa N."/>
            <person name="Hill D."/>
            <person name="Huminiecki L."/>
            <person name="Iacono M."/>
            <person name="Ikeo K."/>
            <person name="Iwama A."/>
            <person name="Ishikawa T."/>
            <person name="Jakt M."/>
            <person name="Kanapin A."/>
            <person name="Katoh M."/>
            <person name="Kawasawa Y."/>
            <person name="Kelso J."/>
            <person name="Kitamura H."/>
            <person name="Kitano H."/>
            <person name="Kollias G."/>
            <person name="Krishnan S.P."/>
            <person name="Kruger A."/>
            <person name="Kummerfeld S.K."/>
            <person name="Kurochkin I.V."/>
            <person name="Lareau L.F."/>
            <person name="Lazarevic D."/>
            <person name="Lipovich L."/>
            <person name="Liu J."/>
            <person name="Liuni S."/>
            <person name="McWilliam S."/>
            <person name="Madan Babu M."/>
            <person name="Madera M."/>
            <person name="Marchionni L."/>
            <person name="Matsuda H."/>
            <person name="Matsuzawa S."/>
            <person name="Miki H."/>
            <person name="Mignone F."/>
            <person name="Miyake S."/>
            <person name="Morris K."/>
            <person name="Mottagui-Tabar S."/>
            <person name="Mulder N."/>
            <person name="Nakano N."/>
            <person name="Nakauchi H."/>
            <person name="Ng P."/>
            <person name="Nilsson R."/>
            <person name="Nishiguchi S."/>
            <person name="Nishikawa S."/>
            <person name="Nori F."/>
            <person name="Ohara O."/>
            <person name="Okazaki Y."/>
            <person name="Orlando V."/>
            <person name="Pang K.C."/>
            <person name="Pavan W.J."/>
            <person name="Pavesi G."/>
            <person name="Pesole G."/>
            <person name="Petrovsky N."/>
            <person name="Piazza S."/>
            <person name="Reed J."/>
            <person name="Reid J.F."/>
            <person name="Ring B.Z."/>
            <person name="Ringwald M."/>
            <person name="Rost B."/>
            <person name="Ruan Y."/>
            <person name="Salzberg S.L."/>
            <person name="Sandelin A."/>
            <person name="Schneider C."/>
            <person name="Schoenbach C."/>
            <person name="Sekiguchi K."/>
            <person name="Semple C.A."/>
            <person name="Seno S."/>
            <person name="Sessa L."/>
            <person name="Sheng Y."/>
            <person name="Shibata Y."/>
            <person name="Shimada H."/>
            <person name="Shimada K."/>
            <person name="Silva D."/>
            <person name="Sinclair B."/>
            <person name="Sperling S."/>
            <person name="Stupka E."/>
            <person name="Sugiura K."/>
            <person name="Sultana R."/>
            <person name="Takenaka Y."/>
            <person name="Taki K."/>
            <person name="Tammoja K."/>
            <person name="Tan S.L."/>
            <person name="Tang S."/>
            <person name="Taylor M.S."/>
            <person name="Tegner J."/>
            <person name="Teichmann S.A."/>
            <person name="Ueda H.R."/>
            <person name="van Nimwegen E."/>
            <person name="Verardo R."/>
            <person name="Wei C.L."/>
            <person name="Yagi K."/>
            <person name="Yamanishi H."/>
            <person name="Zabarovsky E."/>
            <person name="Zhu S."/>
            <person name="Zimmer A."/>
            <person name="Hide W."/>
            <person name="Bult C."/>
            <person name="Grimmond S.M."/>
            <person name="Teasdale R.D."/>
            <person name="Liu E.T."/>
            <person name="Brusic V."/>
            <person name="Quackenbush J."/>
            <person name="Wahlestedt C."/>
            <person name="Mattick J.S."/>
            <person name="Hume D.A."/>
            <person name="Kai C."/>
            <person name="Sasaki D."/>
            <person name="Tomaru Y."/>
            <person name="Fukuda S."/>
            <person name="Kanamori-Katayama M."/>
            <person name="Suzuki M."/>
            <person name="Aoki J."/>
            <person name="Arakawa T."/>
            <person name="Iida J."/>
            <person name="Imamura K."/>
            <person name="Itoh M."/>
            <person name="Kato T."/>
            <person name="Kawaji H."/>
            <person name="Kawagashira N."/>
            <person name="Kawashima T."/>
            <person name="Kojima M."/>
            <person name="Kondo S."/>
            <person name="Konno H."/>
            <person name="Nakano K."/>
            <person name="Ninomiya N."/>
            <person name="Nishio T."/>
            <person name="Okada M."/>
            <person name="Plessy C."/>
            <person name="Shibata K."/>
            <person name="Shiraki T."/>
            <person name="Suzuki S."/>
            <person name="Tagami M."/>
            <person name="Waki K."/>
            <person name="Watahiki A."/>
            <person name="Okamura-Oho Y."/>
            <person name="Suzuki H."/>
            <person name="Kawai J."/>
            <person name="Hayashizaki Y."/>
        </authorList>
    </citation>
    <scope>NUCLEOTIDE SEQUENCE [LARGE SCALE MRNA] (ISOFORM 1)</scope>
    <scope>NUCLEOTIDE SEQUENCE [LARGE SCALE MRNA] (ISOFORM 1/2)</scope>
    <source>
        <strain>C57BL/6J</strain>
        <tissue>Bone marrow</tissue>
        <tissue>Urinary bladder</tissue>
    </source>
</reference>
<reference key="2">
    <citation type="journal article" date="2009" name="PLoS Biol.">
        <title>Lineage-specific biology revealed by a finished genome assembly of the mouse.</title>
        <authorList>
            <person name="Church D.M."/>
            <person name="Goodstadt L."/>
            <person name="Hillier L.W."/>
            <person name="Zody M.C."/>
            <person name="Goldstein S."/>
            <person name="She X."/>
            <person name="Bult C.J."/>
            <person name="Agarwala R."/>
            <person name="Cherry J.L."/>
            <person name="DiCuccio M."/>
            <person name="Hlavina W."/>
            <person name="Kapustin Y."/>
            <person name="Meric P."/>
            <person name="Maglott D."/>
            <person name="Birtle Z."/>
            <person name="Marques A.C."/>
            <person name="Graves T."/>
            <person name="Zhou S."/>
            <person name="Teague B."/>
            <person name="Potamousis K."/>
            <person name="Churas C."/>
            <person name="Place M."/>
            <person name="Herschleb J."/>
            <person name="Runnheim R."/>
            <person name="Forrest D."/>
            <person name="Amos-Landgraf J."/>
            <person name="Schwartz D.C."/>
            <person name="Cheng Z."/>
            <person name="Lindblad-Toh K."/>
            <person name="Eichler E.E."/>
            <person name="Ponting C.P."/>
        </authorList>
    </citation>
    <scope>NUCLEOTIDE SEQUENCE [LARGE SCALE GENOMIC DNA]</scope>
    <source>
        <strain>C57BL/6J</strain>
    </source>
</reference>
<reference key="3">
    <citation type="journal article" date="2004" name="Genome Res.">
        <title>The status, quality, and expansion of the NIH full-length cDNA project: the Mammalian Gene Collection (MGC).</title>
        <authorList>
            <consortium name="The MGC Project Team"/>
        </authorList>
    </citation>
    <scope>NUCLEOTIDE SEQUENCE [LARGE SCALE MRNA] OF 21-656 (ISOFORM 1/2)</scope>
    <source>
        <strain>FVB/N</strain>
        <tissue>Liver</tissue>
    </source>
</reference>
<reference key="4">
    <citation type="journal article" date="2006" name="Am. J. Hum. Genet.">
        <title>Identification of the gene encoding the enzyme deficient in mucopolysaccharidosis IIIC (Sanfilippo disease type C).</title>
        <authorList>
            <person name="Fan X."/>
            <person name="Zhang H."/>
            <person name="Zhang S."/>
            <person name="Bagshaw R.D."/>
            <person name="Tropak M.B."/>
            <person name="Callahan J.W."/>
            <person name="Mahuran D.J."/>
        </authorList>
    </citation>
    <scope>IDENTIFICATION BY MASS SPECTROMETRY</scope>
    <scope>FUNCTION</scope>
    <scope>CATALYTIC ACTIVITY</scope>
    <scope>SUBCELLULAR LOCATION</scope>
    <scope>TISSUE SPECIFICITY</scope>
</reference>
<reference key="5">
    <citation type="journal article" date="2007" name="J. Immunol.">
        <title>Quantitative time-resolved phosphoproteomic analysis of mast cell signaling.</title>
        <authorList>
            <person name="Cao L."/>
            <person name="Yu K."/>
            <person name="Banh C."/>
            <person name="Nguyen V."/>
            <person name="Ritz A."/>
            <person name="Raphael B.J."/>
            <person name="Kawakami Y."/>
            <person name="Kawakami T."/>
            <person name="Salomon A.R."/>
        </authorList>
    </citation>
    <scope>PHOSPHORYLATION [LARGE SCALE ANALYSIS] AT TYR-249</scope>
    <scope>IDENTIFICATION BY MASS SPECTROMETRY [LARGE SCALE ANALYSIS]</scope>
    <source>
        <tissue>Mast cell</tissue>
    </source>
</reference>
<reference key="6">
    <citation type="journal article" date="2009" name="Nat. Biotechnol.">
        <title>Mass-spectrometric identification and relative quantification of N-linked cell surface glycoproteins.</title>
        <authorList>
            <person name="Wollscheid B."/>
            <person name="Bausch-Fluck D."/>
            <person name="Henderson C."/>
            <person name="O'Brien R."/>
            <person name="Bibel M."/>
            <person name="Schiess R."/>
            <person name="Aebersold R."/>
            <person name="Watts J.D."/>
        </authorList>
    </citation>
    <scope>GLYCOSYLATION [LARGE SCALE ANALYSIS] AT ASN-157</scope>
</reference>
<reference key="7">
    <citation type="journal article" date="2010" name="Cell">
        <title>A tissue-specific atlas of mouse protein phosphorylation and expression.</title>
        <authorList>
            <person name="Huttlin E.L."/>
            <person name="Jedrychowski M.P."/>
            <person name="Elias J.E."/>
            <person name="Goswami T."/>
            <person name="Rad R."/>
            <person name="Beausoleil S.A."/>
            <person name="Villen J."/>
            <person name="Haas W."/>
            <person name="Sowa M.E."/>
            <person name="Gygi S.P."/>
        </authorList>
    </citation>
    <scope>IDENTIFICATION BY MASS SPECTROMETRY [LARGE SCALE ANALYSIS]</scope>
    <source>
        <tissue>Testis</tissue>
    </source>
</reference>
<reference key="8">
    <citation type="journal article" date="2015" name="Hum. Mol. Genet.">
        <title>Non-syndromic retinitis pigmentosa due to mutations in the mucopolysaccharidosis type IIIC gene, heparan-alpha-glucosaminide N-acetyltransferase (HGSNAT).</title>
        <authorList>
            <person name="Haer-Wigman L."/>
            <person name="Newman H."/>
            <person name="Leibu R."/>
            <person name="Bax N.M."/>
            <person name="Baris H.N."/>
            <person name="Rizel L."/>
            <person name="Banin E."/>
            <person name="Massarweh A."/>
            <person name="Roosing S."/>
            <person name="Lefeber D.J."/>
            <person name="Zonneveld-Vrieling M.N."/>
            <person name="Isakov O."/>
            <person name="Shomron N."/>
            <person name="Sharon D."/>
            <person name="Den Hollander A.I."/>
            <person name="Hoyng C.B."/>
            <person name="Cremers F.P."/>
            <person name="Ben-Yosef T."/>
        </authorList>
    </citation>
    <scope>TISSUE SPECIFICITY</scope>
    <scope>DEVELOPMENTAL STAGE</scope>
</reference>
<gene>
    <name type="primary">Hgsnat</name>
    <name type="synonym">D8Ertd354e</name>
    <name type="synonym">Tmem76</name>
</gene>
<dbReference type="EC" id="2.3.1.78"/>
<dbReference type="EMBL" id="AK035264">
    <property type="protein sequence ID" value="BAC29006.1"/>
    <property type="status" value="ALT_INIT"/>
    <property type="molecule type" value="mRNA"/>
</dbReference>
<dbReference type="EMBL" id="AK149883">
    <property type="protein sequence ID" value="BAE29143.1"/>
    <property type="molecule type" value="mRNA"/>
</dbReference>
<dbReference type="EMBL" id="AK152926">
    <property type="protein sequence ID" value="BAE31601.1"/>
    <property type="status" value="ALT_INIT"/>
    <property type="molecule type" value="mRNA"/>
</dbReference>
<dbReference type="EMBL" id="AK159649">
    <property type="protein sequence ID" value="BAE35261.1"/>
    <property type="status" value="ALT_INIT"/>
    <property type="molecule type" value="mRNA"/>
</dbReference>
<dbReference type="EMBL" id="AK160068">
    <property type="protein sequence ID" value="BAE35603.1"/>
    <property type="status" value="ALT_INIT"/>
    <property type="molecule type" value="mRNA"/>
</dbReference>
<dbReference type="EMBL" id="AC093366">
    <property type="status" value="NOT_ANNOTATED_CDS"/>
    <property type="molecule type" value="Genomic_DNA"/>
</dbReference>
<dbReference type="EMBL" id="BC024084">
    <property type="protein sequence ID" value="AAH24084.1"/>
    <property type="status" value="ALT_INIT"/>
    <property type="molecule type" value="mRNA"/>
</dbReference>
<dbReference type="CCDS" id="CCDS40309.1">
    <molecule id="Q3UDW8-2"/>
</dbReference>
<dbReference type="RefSeq" id="NP_084160.2">
    <molecule id="Q3UDW8-2"/>
    <property type="nucleotide sequence ID" value="NM_029884.2"/>
</dbReference>
<dbReference type="SMR" id="Q3UDW8"/>
<dbReference type="FunCoup" id="Q3UDW8">
    <property type="interactions" value="1234"/>
</dbReference>
<dbReference type="STRING" id="10090.ENSMUSP00000040356"/>
<dbReference type="GlyConnect" id="2368">
    <property type="glycosylation" value="2 N-Linked glycans (1 site)"/>
</dbReference>
<dbReference type="GlyCosmos" id="Q3UDW8">
    <property type="glycosylation" value="2 sites, 2 glycans"/>
</dbReference>
<dbReference type="GlyGen" id="Q3UDW8">
    <property type="glycosylation" value="3 sites, 4 N-linked glycans (3 sites)"/>
</dbReference>
<dbReference type="iPTMnet" id="Q3UDW8"/>
<dbReference type="PhosphoSitePlus" id="Q3UDW8"/>
<dbReference type="SwissPalm" id="Q3UDW8"/>
<dbReference type="jPOST" id="Q3UDW8"/>
<dbReference type="PaxDb" id="10090-ENSMUSP00000040356"/>
<dbReference type="PeptideAtlas" id="Q3UDW8"/>
<dbReference type="ProteomicsDB" id="269743">
    <molecule id="Q3UDW8-1"/>
</dbReference>
<dbReference type="ProteomicsDB" id="269744">
    <molecule id="Q3UDW8-2"/>
</dbReference>
<dbReference type="Pumba" id="Q3UDW8"/>
<dbReference type="Antibodypedia" id="24209">
    <property type="antibodies" value="42 antibodies from 15 providers"/>
</dbReference>
<dbReference type="DNASU" id="52120"/>
<dbReference type="Ensembl" id="ENSMUST00000037609.8">
    <molecule id="Q3UDW8-2"/>
    <property type="protein sequence ID" value="ENSMUSP00000040356.8"/>
    <property type="gene ID" value="ENSMUSG00000037260.9"/>
</dbReference>
<dbReference type="GeneID" id="52120"/>
<dbReference type="KEGG" id="mmu:52120"/>
<dbReference type="UCSC" id="uc009lhg.1">
    <molecule id="Q3UDW8-1"/>
    <property type="organism name" value="mouse"/>
</dbReference>
<dbReference type="AGR" id="MGI:1196297"/>
<dbReference type="CTD" id="138050"/>
<dbReference type="MGI" id="MGI:1196297">
    <property type="gene designation" value="Hgsnat"/>
</dbReference>
<dbReference type="VEuPathDB" id="HostDB:ENSMUSG00000037260"/>
<dbReference type="eggNOG" id="KOG4683">
    <property type="taxonomic scope" value="Eukaryota"/>
</dbReference>
<dbReference type="GeneTree" id="ENSGT00390000001491"/>
<dbReference type="HOGENOM" id="CLU_029171_3_2_1"/>
<dbReference type="InParanoid" id="Q3UDW8"/>
<dbReference type="OMA" id="CHQCLYQ"/>
<dbReference type="OrthoDB" id="2149840at2759"/>
<dbReference type="PhylomeDB" id="Q3UDW8"/>
<dbReference type="TreeFam" id="TF324790"/>
<dbReference type="BRENDA" id="2.3.1.78">
    <property type="organism ID" value="3474"/>
</dbReference>
<dbReference type="Reactome" id="R-MMU-2024096">
    <property type="pathway name" value="HS-GAG degradation"/>
</dbReference>
<dbReference type="Reactome" id="R-MMU-6798695">
    <property type="pathway name" value="Neutrophil degranulation"/>
</dbReference>
<dbReference type="BioGRID-ORCS" id="52120">
    <property type="hits" value="2 hits in 77 CRISPR screens"/>
</dbReference>
<dbReference type="ChiTaRS" id="Hgsnat">
    <property type="organism name" value="mouse"/>
</dbReference>
<dbReference type="PRO" id="PR:Q3UDW8"/>
<dbReference type="Proteomes" id="UP000000589">
    <property type="component" value="Chromosome 8"/>
</dbReference>
<dbReference type="RNAct" id="Q3UDW8">
    <property type="molecule type" value="protein"/>
</dbReference>
<dbReference type="Bgee" id="ENSMUSG00000037260">
    <property type="expression patterns" value="Expressed in stroma of bone marrow and 260 other cell types or tissues"/>
</dbReference>
<dbReference type="ExpressionAtlas" id="Q3UDW8">
    <property type="expression patterns" value="baseline and differential"/>
</dbReference>
<dbReference type="GO" id="GO:0043202">
    <property type="term" value="C:lysosomal lumen"/>
    <property type="evidence" value="ECO:0000314"/>
    <property type="project" value="MGI"/>
</dbReference>
<dbReference type="GO" id="GO:0005765">
    <property type="term" value="C:lysosomal membrane"/>
    <property type="evidence" value="ECO:0000250"/>
    <property type="project" value="UniProtKB"/>
</dbReference>
<dbReference type="GO" id="GO:0016746">
    <property type="term" value="F:acyltransferase activity"/>
    <property type="evidence" value="ECO:0000250"/>
    <property type="project" value="UniProtKB"/>
</dbReference>
<dbReference type="GO" id="GO:0015019">
    <property type="term" value="F:heparan-alpha-glucosaminide N-acetyltransferase activity"/>
    <property type="evidence" value="ECO:0000314"/>
    <property type="project" value="MGI"/>
</dbReference>
<dbReference type="GO" id="GO:0030200">
    <property type="term" value="P:heparan sulfate proteoglycan catabolic process"/>
    <property type="evidence" value="ECO:0000315"/>
    <property type="project" value="FlyBase"/>
</dbReference>
<dbReference type="GO" id="GO:0007041">
    <property type="term" value="P:lysosomal transport"/>
    <property type="evidence" value="ECO:0000250"/>
    <property type="project" value="UniProtKB"/>
</dbReference>
<dbReference type="GO" id="GO:0051259">
    <property type="term" value="P:protein complex oligomerization"/>
    <property type="evidence" value="ECO:0000250"/>
    <property type="project" value="UniProtKB"/>
</dbReference>
<dbReference type="InterPro" id="IPR012429">
    <property type="entry name" value="HGSNAT_cat"/>
</dbReference>
<dbReference type="PANTHER" id="PTHR31061:SF37">
    <property type="entry name" value="HEPARAN-ALPHA-GLUCOSAMINIDE N-ACETYLTRANSFERASE"/>
    <property type="match status" value="1"/>
</dbReference>
<dbReference type="PANTHER" id="PTHR31061">
    <property type="entry name" value="LD22376P"/>
    <property type="match status" value="1"/>
</dbReference>
<dbReference type="Pfam" id="PF07786">
    <property type="entry name" value="HGSNAT_cat"/>
    <property type="match status" value="1"/>
</dbReference>